<dbReference type="EMBL" id="BA000034">
    <property type="protein sequence ID" value="BAC64344.1"/>
    <property type="molecule type" value="Genomic_DNA"/>
</dbReference>
<dbReference type="RefSeq" id="WP_002984948.1">
    <property type="nucleotide sequence ID" value="NC_004606.1"/>
</dbReference>
<dbReference type="SMR" id="P0DA37"/>
<dbReference type="GeneID" id="69901010"/>
<dbReference type="KEGG" id="sps:SPs1249"/>
<dbReference type="HOGENOM" id="CLU_014218_8_2_9"/>
<dbReference type="GO" id="GO:0009376">
    <property type="term" value="C:HslUV protease complex"/>
    <property type="evidence" value="ECO:0007669"/>
    <property type="project" value="TreeGrafter"/>
</dbReference>
<dbReference type="GO" id="GO:0005524">
    <property type="term" value="F:ATP binding"/>
    <property type="evidence" value="ECO:0007669"/>
    <property type="project" value="UniProtKB-UniRule"/>
</dbReference>
<dbReference type="GO" id="GO:0016887">
    <property type="term" value="F:ATP hydrolysis activity"/>
    <property type="evidence" value="ECO:0007669"/>
    <property type="project" value="InterPro"/>
</dbReference>
<dbReference type="GO" id="GO:0140662">
    <property type="term" value="F:ATP-dependent protein folding chaperone"/>
    <property type="evidence" value="ECO:0007669"/>
    <property type="project" value="InterPro"/>
</dbReference>
<dbReference type="GO" id="GO:0046983">
    <property type="term" value="F:protein dimerization activity"/>
    <property type="evidence" value="ECO:0007669"/>
    <property type="project" value="InterPro"/>
</dbReference>
<dbReference type="GO" id="GO:0051082">
    <property type="term" value="F:unfolded protein binding"/>
    <property type="evidence" value="ECO:0007669"/>
    <property type="project" value="UniProtKB-UniRule"/>
</dbReference>
<dbReference type="GO" id="GO:0008270">
    <property type="term" value="F:zinc ion binding"/>
    <property type="evidence" value="ECO:0007669"/>
    <property type="project" value="InterPro"/>
</dbReference>
<dbReference type="GO" id="GO:0051301">
    <property type="term" value="P:cell division"/>
    <property type="evidence" value="ECO:0007669"/>
    <property type="project" value="TreeGrafter"/>
</dbReference>
<dbReference type="GO" id="GO:0051603">
    <property type="term" value="P:proteolysis involved in protein catabolic process"/>
    <property type="evidence" value="ECO:0007669"/>
    <property type="project" value="TreeGrafter"/>
</dbReference>
<dbReference type="CDD" id="cd19497">
    <property type="entry name" value="RecA-like_ClpX"/>
    <property type="match status" value="1"/>
</dbReference>
<dbReference type="FunFam" id="1.10.8.60:FF:000002">
    <property type="entry name" value="ATP-dependent Clp protease ATP-binding subunit ClpX"/>
    <property type="match status" value="1"/>
</dbReference>
<dbReference type="FunFam" id="3.40.50.300:FF:000005">
    <property type="entry name" value="ATP-dependent Clp protease ATP-binding subunit ClpX"/>
    <property type="match status" value="1"/>
</dbReference>
<dbReference type="Gene3D" id="1.10.8.60">
    <property type="match status" value="1"/>
</dbReference>
<dbReference type="Gene3D" id="6.20.220.10">
    <property type="entry name" value="ClpX chaperone, C4-type zinc finger domain"/>
    <property type="match status" value="1"/>
</dbReference>
<dbReference type="Gene3D" id="3.40.50.300">
    <property type="entry name" value="P-loop containing nucleotide triphosphate hydrolases"/>
    <property type="match status" value="1"/>
</dbReference>
<dbReference type="HAMAP" id="MF_00175">
    <property type="entry name" value="ClpX"/>
    <property type="match status" value="1"/>
</dbReference>
<dbReference type="InterPro" id="IPR003593">
    <property type="entry name" value="AAA+_ATPase"/>
</dbReference>
<dbReference type="InterPro" id="IPR050052">
    <property type="entry name" value="ATP-dep_Clp_protease_ClpX"/>
</dbReference>
<dbReference type="InterPro" id="IPR003959">
    <property type="entry name" value="ATPase_AAA_core"/>
</dbReference>
<dbReference type="InterPro" id="IPR019489">
    <property type="entry name" value="Clp_ATPase_C"/>
</dbReference>
<dbReference type="InterPro" id="IPR004487">
    <property type="entry name" value="Clp_protease_ATP-bd_su_ClpX"/>
</dbReference>
<dbReference type="InterPro" id="IPR046425">
    <property type="entry name" value="ClpX_bact"/>
</dbReference>
<dbReference type="InterPro" id="IPR027417">
    <property type="entry name" value="P-loop_NTPase"/>
</dbReference>
<dbReference type="InterPro" id="IPR010603">
    <property type="entry name" value="Znf_CppX_C4"/>
</dbReference>
<dbReference type="InterPro" id="IPR038366">
    <property type="entry name" value="Znf_CppX_C4_sf"/>
</dbReference>
<dbReference type="NCBIfam" id="TIGR00382">
    <property type="entry name" value="clpX"/>
    <property type="match status" value="1"/>
</dbReference>
<dbReference type="NCBIfam" id="NF003745">
    <property type="entry name" value="PRK05342.1"/>
    <property type="match status" value="1"/>
</dbReference>
<dbReference type="PANTHER" id="PTHR48102:SF7">
    <property type="entry name" value="ATP-DEPENDENT CLP PROTEASE ATP-BINDING SUBUNIT CLPX-LIKE, MITOCHONDRIAL"/>
    <property type="match status" value="1"/>
</dbReference>
<dbReference type="PANTHER" id="PTHR48102">
    <property type="entry name" value="ATP-DEPENDENT CLP PROTEASE ATP-BINDING SUBUNIT CLPX-LIKE, MITOCHONDRIAL-RELATED"/>
    <property type="match status" value="1"/>
</dbReference>
<dbReference type="Pfam" id="PF07724">
    <property type="entry name" value="AAA_2"/>
    <property type="match status" value="1"/>
</dbReference>
<dbReference type="Pfam" id="PF10431">
    <property type="entry name" value="ClpB_D2-small"/>
    <property type="match status" value="1"/>
</dbReference>
<dbReference type="Pfam" id="PF06689">
    <property type="entry name" value="zf-C4_ClpX"/>
    <property type="match status" value="1"/>
</dbReference>
<dbReference type="SMART" id="SM00382">
    <property type="entry name" value="AAA"/>
    <property type="match status" value="1"/>
</dbReference>
<dbReference type="SMART" id="SM01086">
    <property type="entry name" value="ClpB_D2-small"/>
    <property type="match status" value="1"/>
</dbReference>
<dbReference type="SMART" id="SM00994">
    <property type="entry name" value="zf-C4_ClpX"/>
    <property type="match status" value="1"/>
</dbReference>
<dbReference type="SUPFAM" id="SSF57716">
    <property type="entry name" value="Glucocorticoid receptor-like (DNA-binding domain)"/>
    <property type="match status" value="1"/>
</dbReference>
<dbReference type="SUPFAM" id="SSF52540">
    <property type="entry name" value="P-loop containing nucleoside triphosphate hydrolases"/>
    <property type="match status" value="1"/>
</dbReference>
<dbReference type="PROSITE" id="PS51902">
    <property type="entry name" value="CLPX_ZB"/>
    <property type="match status" value="1"/>
</dbReference>
<feature type="chain" id="PRO_0000411306" description="ATP-dependent Clp protease ATP-binding subunit ClpX">
    <location>
        <begin position="1"/>
        <end position="409"/>
    </location>
</feature>
<feature type="domain" description="ClpX-type ZB" evidence="2">
    <location>
        <begin position="1"/>
        <end position="54"/>
    </location>
</feature>
<feature type="binding site" evidence="2">
    <location>
        <position position="13"/>
    </location>
    <ligand>
        <name>Zn(2+)</name>
        <dbReference type="ChEBI" id="CHEBI:29105"/>
    </ligand>
</feature>
<feature type="binding site" evidence="2">
    <location>
        <position position="16"/>
    </location>
    <ligand>
        <name>Zn(2+)</name>
        <dbReference type="ChEBI" id="CHEBI:29105"/>
    </ligand>
</feature>
<feature type="binding site" evidence="2">
    <location>
        <position position="35"/>
    </location>
    <ligand>
        <name>Zn(2+)</name>
        <dbReference type="ChEBI" id="CHEBI:29105"/>
    </ligand>
</feature>
<feature type="binding site" evidence="2">
    <location>
        <position position="38"/>
    </location>
    <ligand>
        <name>Zn(2+)</name>
        <dbReference type="ChEBI" id="CHEBI:29105"/>
    </ligand>
</feature>
<feature type="binding site" evidence="1">
    <location>
        <begin position="119"/>
        <end position="126"/>
    </location>
    <ligand>
        <name>ATP</name>
        <dbReference type="ChEBI" id="CHEBI:30616"/>
    </ligand>
</feature>
<gene>
    <name evidence="1" type="primary">clpX</name>
    <name type="ordered locus">SPs1249</name>
</gene>
<proteinExistence type="inferred from homology"/>
<accession>P0DA37</accession>
<accession>P63794</accession>
<accession>Q9A089</accession>
<comment type="function">
    <text evidence="1">ATP-dependent specificity component of the Clp protease. It directs the protease to specific substrates. Can perform chaperone functions in the absence of ClpP.</text>
</comment>
<comment type="subunit">
    <text evidence="1">Component of the ClpX-ClpP complex. Forms a hexameric ring that, in the presence of ATP, binds to fourteen ClpP subunits assembled into a disk-like structure with a central cavity, resembling the structure of eukaryotic proteasomes.</text>
</comment>
<comment type="similarity">
    <text evidence="1">Belongs to the ClpX chaperone family.</text>
</comment>
<evidence type="ECO:0000255" key="1">
    <source>
        <dbReference type="HAMAP-Rule" id="MF_00175"/>
    </source>
</evidence>
<evidence type="ECO:0000255" key="2">
    <source>
        <dbReference type="PROSITE-ProRule" id="PRU01250"/>
    </source>
</evidence>
<sequence>MAGSRTNDIKVYCSFCGKSQDDVKKIIAGNNVFICNECVALSQEIIKEELAEEVLADLTEVPKPKELLDVLNQYVVGQDRAKRALSVAVYNHYKRVSFTESRDDDDVDLQKSNILMIGPTGSGKTFLAQTLAKSLNVPFAIADATSLTEAGYVGEDVENILLKLIQAADYNVERAERGIIYVDEIDKIAKKGENVSITRDVSGEGVQQALLKIIEGTVASVPPQGGRKHPNQEMIQIDTKNILFIVGGAFDGIEEIVKQRLGEKVIGFGQNSRKIDDNASYMQEIISEDIQKFGLIPEFIGRLPVVAALEQLNTSDLIQILTEPRNALVKQYQALLSYDGVELAFDKEALEAIANKAIERKTGARGLRSIIEETMLDIMFEIPSQEDVTKVRITKAAVEGKSKPVLETA</sequence>
<keyword id="KW-0067">ATP-binding</keyword>
<keyword id="KW-0143">Chaperone</keyword>
<keyword id="KW-0479">Metal-binding</keyword>
<keyword id="KW-0547">Nucleotide-binding</keyword>
<keyword id="KW-0862">Zinc</keyword>
<name>CLPX_STRPQ</name>
<protein>
    <recommendedName>
        <fullName evidence="1">ATP-dependent Clp protease ATP-binding subunit ClpX</fullName>
    </recommendedName>
</protein>
<reference key="1">
    <citation type="journal article" date="2003" name="Genome Res.">
        <title>Genome sequence of an M3 strain of Streptococcus pyogenes reveals a large-scale genomic rearrangement in invasive strains and new insights into phage evolution.</title>
        <authorList>
            <person name="Nakagawa I."/>
            <person name="Kurokawa K."/>
            <person name="Yamashita A."/>
            <person name="Nakata M."/>
            <person name="Tomiyasu Y."/>
            <person name="Okahashi N."/>
            <person name="Kawabata S."/>
            <person name="Yamazaki K."/>
            <person name="Shiba T."/>
            <person name="Yasunaga T."/>
            <person name="Hayashi H."/>
            <person name="Hattori M."/>
            <person name="Hamada S."/>
        </authorList>
    </citation>
    <scope>NUCLEOTIDE SEQUENCE [LARGE SCALE GENOMIC DNA]</scope>
    <source>
        <strain>SSI-1</strain>
    </source>
</reference>
<organism>
    <name type="scientific">Streptococcus pyogenes serotype M3 (strain SSI-1)</name>
    <dbReference type="NCBI Taxonomy" id="193567"/>
    <lineage>
        <taxon>Bacteria</taxon>
        <taxon>Bacillati</taxon>
        <taxon>Bacillota</taxon>
        <taxon>Bacilli</taxon>
        <taxon>Lactobacillales</taxon>
        <taxon>Streptococcaceae</taxon>
        <taxon>Streptococcus</taxon>
    </lineage>
</organism>